<evidence type="ECO:0000250" key="1"/>
<evidence type="ECO:0000255" key="2"/>
<evidence type="ECO:0000269" key="3">
    <source>
    </source>
</evidence>
<evidence type="ECO:0000305" key="4"/>
<protein>
    <recommendedName>
        <fullName>Probable protein transport protein Sec61 subunit gamma</fullName>
    </recommendedName>
</protein>
<name>SC61G_SCHPO</name>
<feature type="chain" id="PRO_0000104210" description="Probable protein transport protein Sec61 subunit gamma">
    <location>
        <begin position="1"/>
        <end position="70"/>
    </location>
</feature>
<feature type="topological domain" description="Cytoplasmic" evidence="2">
    <location>
        <begin position="1"/>
        <end position="33"/>
    </location>
</feature>
<feature type="transmembrane region" description="Helical" evidence="2">
    <location>
        <begin position="34"/>
        <end position="62"/>
    </location>
</feature>
<feature type="topological domain" description="Extracellular" evidence="2">
    <location>
        <begin position="63"/>
        <end position="70"/>
    </location>
</feature>
<comment type="function">
    <text evidence="4">Necessary for protein translocation in the endoplasmic reticulum.</text>
</comment>
<comment type="subunit">
    <text evidence="1">Heterotrimeric complex composed of SEC61-alpha, SEC61-beta and SEC61-gamma.</text>
</comment>
<comment type="subcellular location">
    <subcellularLocation>
        <location evidence="3">Endoplasmic reticulum membrane</location>
        <topology evidence="3">Single-pass membrane protein</topology>
    </subcellularLocation>
</comment>
<comment type="similarity">
    <text evidence="4">Belongs to the SecE/SEC61-gamma family.</text>
</comment>
<gene>
    <name type="primary">sss1</name>
    <name type="ORF">SPAC4G8.02c</name>
</gene>
<sequence length="70" mass="7791">MADNADDLFQIPKNFYKEGSHFIKRCVKPDRKEFLSISKAVATGFVLMGLIGYIIKLIHIPINKVLVGGA</sequence>
<accession>Q09827</accession>
<keyword id="KW-0256">Endoplasmic reticulum</keyword>
<keyword id="KW-0472">Membrane</keyword>
<keyword id="KW-0653">Protein transport</keyword>
<keyword id="KW-1185">Reference proteome</keyword>
<keyword id="KW-0811">Translocation</keyword>
<keyword id="KW-0812">Transmembrane</keyword>
<keyword id="KW-1133">Transmembrane helix</keyword>
<keyword id="KW-0813">Transport</keyword>
<reference key="1">
    <citation type="journal article" date="2002" name="Nature">
        <title>The genome sequence of Schizosaccharomyces pombe.</title>
        <authorList>
            <person name="Wood V."/>
            <person name="Gwilliam R."/>
            <person name="Rajandream M.A."/>
            <person name="Lyne M.H."/>
            <person name="Lyne R."/>
            <person name="Stewart A."/>
            <person name="Sgouros J.G."/>
            <person name="Peat N."/>
            <person name="Hayles J."/>
            <person name="Baker S.G."/>
            <person name="Basham D."/>
            <person name="Bowman S."/>
            <person name="Brooks K."/>
            <person name="Brown D."/>
            <person name="Brown S."/>
            <person name="Chillingworth T."/>
            <person name="Churcher C.M."/>
            <person name="Collins M."/>
            <person name="Connor R."/>
            <person name="Cronin A."/>
            <person name="Davis P."/>
            <person name="Feltwell T."/>
            <person name="Fraser A."/>
            <person name="Gentles S."/>
            <person name="Goble A."/>
            <person name="Hamlin N."/>
            <person name="Harris D.E."/>
            <person name="Hidalgo J."/>
            <person name="Hodgson G."/>
            <person name="Holroyd S."/>
            <person name="Hornsby T."/>
            <person name="Howarth S."/>
            <person name="Huckle E.J."/>
            <person name="Hunt S."/>
            <person name="Jagels K."/>
            <person name="James K.D."/>
            <person name="Jones L."/>
            <person name="Jones M."/>
            <person name="Leather S."/>
            <person name="McDonald S."/>
            <person name="McLean J."/>
            <person name="Mooney P."/>
            <person name="Moule S."/>
            <person name="Mungall K.L."/>
            <person name="Murphy L.D."/>
            <person name="Niblett D."/>
            <person name="Odell C."/>
            <person name="Oliver K."/>
            <person name="O'Neil S."/>
            <person name="Pearson D."/>
            <person name="Quail M.A."/>
            <person name="Rabbinowitsch E."/>
            <person name="Rutherford K.M."/>
            <person name="Rutter S."/>
            <person name="Saunders D."/>
            <person name="Seeger K."/>
            <person name="Sharp S."/>
            <person name="Skelton J."/>
            <person name="Simmonds M.N."/>
            <person name="Squares R."/>
            <person name="Squares S."/>
            <person name="Stevens K."/>
            <person name="Taylor K."/>
            <person name="Taylor R.G."/>
            <person name="Tivey A."/>
            <person name="Walsh S.V."/>
            <person name="Warren T."/>
            <person name="Whitehead S."/>
            <person name="Woodward J.R."/>
            <person name="Volckaert G."/>
            <person name="Aert R."/>
            <person name="Robben J."/>
            <person name="Grymonprez B."/>
            <person name="Weltjens I."/>
            <person name="Vanstreels E."/>
            <person name="Rieger M."/>
            <person name="Schaefer M."/>
            <person name="Mueller-Auer S."/>
            <person name="Gabel C."/>
            <person name="Fuchs M."/>
            <person name="Duesterhoeft A."/>
            <person name="Fritzc C."/>
            <person name="Holzer E."/>
            <person name="Moestl D."/>
            <person name="Hilbert H."/>
            <person name="Borzym K."/>
            <person name="Langer I."/>
            <person name="Beck A."/>
            <person name="Lehrach H."/>
            <person name="Reinhardt R."/>
            <person name="Pohl T.M."/>
            <person name="Eger P."/>
            <person name="Zimmermann W."/>
            <person name="Wedler H."/>
            <person name="Wambutt R."/>
            <person name="Purnelle B."/>
            <person name="Goffeau A."/>
            <person name="Cadieu E."/>
            <person name="Dreano S."/>
            <person name="Gloux S."/>
            <person name="Lelaure V."/>
            <person name="Mottier S."/>
            <person name="Galibert F."/>
            <person name="Aves S.J."/>
            <person name="Xiang Z."/>
            <person name="Hunt C."/>
            <person name="Moore K."/>
            <person name="Hurst S.M."/>
            <person name="Lucas M."/>
            <person name="Rochet M."/>
            <person name="Gaillardin C."/>
            <person name="Tallada V.A."/>
            <person name="Garzon A."/>
            <person name="Thode G."/>
            <person name="Daga R.R."/>
            <person name="Cruzado L."/>
            <person name="Jimenez J."/>
            <person name="Sanchez M."/>
            <person name="del Rey F."/>
            <person name="Benito J."/>
            <person name="Dominguez A."/>
            <person name="Revuelta J.L."/>
            <person name="Moreno S."/>
            <person name="Armstrong J."/>
            <person name="Forsburg S.L."/>
            <person name="Cerutti L."/>
            <person name="Lowe T."/>
            <person name="McCombie W.R."/>
            <person name="Paulsen I."/>
            <person name="Potashkin J."/>
            <person name="Shpakovski G.V."/>
            <person name="Ussery D."/>
            <person name="Barrell B.G."/>
            <person name="Nurse P."/>
        </authorList>
    </citation>
    <scope>NUCLEOTIDE SEQUENCE [LARGE SCALE GENOMIC DNA]</scope>
    <source>
        <strain>972 / ATCC 24843</strain>
    </source>
</reference>
<reference key="2">
    <citation type="journal article" date="2006" name="Nat. Biotechnol.">
        <title>ORFeome cloning and global analysis of protein localization in the fission yeast Schizosaccharomyces pombe.</title>
        <authorList>
            <person name="Matsuyama A."/>
            <person name="Arai R."/>
            <person name="Yashiroda Y."/>
            <person name="Shirai A."/>
            <person name="Kamata A."/>
            <person name="Sekido S."/>
            <person name="Kobayashi Y."/>
            <person name="Hashimoto A."/>
            <person name="Hamamoto M."/>
            <person name="Hiraoka Y."/>
            <person name="Horinouchi S."/>
            <person name="Yoshida M."/>
        </authorList>
    </citation>
    <scope>SUBCELLULAR LOCATION [LARGE SCALE ANALYSIS]</scope>
</reference>
<dbReference type="EMBL" id="CU329670">
    <property type="protein sequence ID" value="CAA91203.1"/>
    <property type="molecule type" value="Genomic_DNA"/>
</dbReference>
<dbReference type="PIR" id="T38846">
    <property type="entry name" value="S62479"/>
</dbReference>
<dbReference type="RefSeq" id="NP_593061.1">
    <property type="nucleotide sequence ID" value="NM_001018459.2"/>
</dbReference>
<dbReference type="SMR" id="Q09827"/>
<dbReference type="FunCoup" id="Q09827">
    <property type="interactions" value="321"/>
</dbReference>
<dbReference type="STRING" id="284812.Q09827"/>
<dbReference type="PaxDb" id="4896-SPAC4G8.02c.1"/>
<dbReference type="EnsemblFungi" id="SPAC4G8.02c.1">
    <property type="protein sequence ID" value="SPAC4G8.02c.1:pep"/>
    <property type="gene ID" value="SPAC4G8.02c"/>
</dbReference>
<dbReference type="GeneID" id="2543140"/>
<dbReference type="KEGG" id="spo:2543140"/>
<dbReference type="PomBase" id="SPAC4G8.02c">
    <property type="gene designation" value="sss1"/>
</dbReference>
<dbReference type="VEuPathDB" id="FungiDB:SPAC4G8.02c"/>
<dbReference type="eggNOG" id="KOG3498">
    <property type="taxonomic scope" value="Eukaryota"/>
</dbReference>
<dbReference type="HOGENOM" id="CLU_167752_2_0_1"/>
<dbReference type="InParanoid" id="Q09827"/>
<dbReference type="OMA" id="KPDQKEY"/>
<dbReference type="PhylomeDB" id="Q09827"/>
<dbReference type="Reactome" id="R-SPO-9609523">
    <property type="pathway name" value="Insertion of tail-anchored proteins into the endoplasmic reticulum membrane"/>
</dbReference>
<dbReference type="PRO" id="PR:Q09827"/>
<dbReference type="Proteomes" id="UP000002485">
    <property type="component" value="Chromosome I"/>
</dbReference>
<dbReference type="GO" id="GO:0005783">
    <property type="term" value="C:endoplasmic reticulum"/>
    <property type="evidence" value="ECO:0007005"/>
    <property type="project" value="PomBase"/>
</dbReference>
<dbReference type="GO" id="GO:0005784">
    <property type="term" value="C:Sec61 translocon complex"/>
    <property type="evidence" value="ECO:0000266"/>
    <property type="project" value="PomBase"/>
</dbReference>
<dbReference type="GO" id="GO:0071261">
    <property type="term" value="C:Ssh1 translocon complex"/>
    <property type="evidence" value="ECO:0000318"/>
    <property type="project" value="GO_Central"/>
</dbReference>
<dbReference type="GO" id="GO:0008320">
    <property type="term" value="F:protein transmembrane transporter activity"/>
    <property type="evidence" value="ECO:0000318"/>
    <property type="project" value="GO_Central"/>
</dbReference>
<dbReference type="GO" id="GO:0031204">
    <property type="term" value="P:post-translational protein targeting to membrane, translocation"/>
    <property type="evidence" value="ECO:0000318"/>
    <property type="project" value="GO_Central"/>
</dbReference>
<dbReference type="GO" id="GO:0045048">
    <property type="term" value="P:protein insertion into ER membrane"/>
    <property type="evidence" value="ECO:0000305"/>
    <property type="project" value="PomBase"/>
</dbReference>
<dbReference type="GO" id="GO:0006616">
    <property type="term" value="P:SRP-dependent cotranslational protein targeting to membrane, translocation"/>
    <property type="evidence" value="ECO:0000266"/>
    <property type="project" value="PomBase"/>
</dbReference>
<dbReference type="Gene3D" id="1.20.5.820">
    <property type="entry name" value="Preprotein translocase SecE subunit"/>
    <property type="match status" value="1"/>
</dbReference>
<dbReference type="HAMAP" id="MF_00422">
    <property type="entry name" value="SecE"/>
    <property type="match status" value="1"/>
</dbReference>
<dbReference type="InterPro" id="IPR023391">
    <property type="entry name" value="Prot_translocase_SecE_dom_sf"/>
</dbReference>
<dbReference type="InterPro" id="IPR008158">
    <property type="entry name" value="Translocase_Sec61-g"/>
</dbReference>
<dbReference type="InterPro" id="IPR001901">
    <property type="entry name" value="Translocase_SecE/Sec61-g"/>
</dbReference>
<dbReference type="NCBIfam" id="TIGR00327">
    <property type="entry name" value="secE_euk_arch"/>
    <property type="match status" value="1"/>
</dbReference>
<dbReference type="PANTHER" id="PTHR12309">
    <property type="entry name" value="SEC61 GAMMA SUBUNIT"/>
    <property type="match status" value="1"/>
</dbReference>
<dbReference type="Pfam" id="PF00584">
    <property type="entry name" value="SecE"/>
    <property type="match status" value="1"/>
</dbReference>
<dbReference type="SUPFAM" id="SSF103456">
    <property type="entry name" value="Preprotein translocase SecE subunit"/>
    <property type="match status" value="1"/>
</dbReference>
<dbReference type="PROSITE" id="PS01067">
    <property type="entry name" value="SECE_SEC61G"/>
    <property type="match status" value="1"/>
</dbReference>
<organism>
    <name type="scientific">Schizosaccharomyces pombe (strain 972 / ATCC 24843)</name>
    <name type="common">Fission yeast</name>
    <dbReference type="NCBI Taxonomy" id="284812"/>
    <lineage>
        <taxon>Eukaryota</taxon>
        <taxon>Fungi</taxon>
        <taxon>Dikarya</taxon>
        <taxon>Ascomycota</taxon>
        <taxon>Taphrinomycotina</taxon>
        <taxon>Schizosaccharomycetes</taxon>
        <taxon>Schizosaccharomycetales</taxon>
        <taxon>Schizosaccharomycetaceae</taxon>
        <taxon>Schizosaccharomyces</taxon>
    </lineage>
</organism>
<proteinExistence type="inferred from homology"/>